<keyword id="KW-0067">ATP-binding</keyword>
<keyword id="KW-0238">DNA-binding</keyword>
<keyword id="KW-0255">Endonuclease</keyword>
<keyword id="KW-0378">Hydrolase</keyword>
<keyword id="KW-0540">Nuclease</keyword>
<keyword id="KW-0547">Nucleotide-binding</keyword>
<keyword id="KW-0694">RNA-binding</keyword>
<keyword id="KW-0699">rRNA-binding</keyword>
<evidence type="ECO:0000255" key="1">
    <source>
        <dbReference type="HAMAP-Rule" id="MF_00092"/>
    </source>
</evidence>
<name>MUTS2_CLOP1</name>
<proteinExistence type="inferred from homology"/>
<gene>
    <name evidence="1" type="primary">mutS2</name>
    <name evidence="1" type="synonym">rqcU</name>
    <name type="ordered locus">CPF_2135</name>
</gene>
<accession>Q0TP77</accession>
<feature type="chain" id="PRO_1000093353" description="Endonuclease MutS2">
    <location>
        <begin position="1"/>
        <end position="786"/>
    </location>
</feature>
<feature type="domain" description="Smr" evidence="1">
    <location>
        <begin position="711"/>
        <end position="786"/>
    </location>
</feature>
<feature type="binding site" evidence="1">
    <location>
        <begin position="332"/>
        <end position="339"/>
    </location>
    <ligand>
        <name>ATP</name>
        <dbReference type="ChEBI" id="CHEBI:30616"/>
    </ligand>
</feature>
<reference key="1">
    <citation type="journal article" date="2006" name="Genome Res.">
        <title>Skewed genomic variability in strains of the toxigenic bacterial pathogen, Clostridium perfringens.</title>
        <authorList>
            <person name="Myers G.S.A."/>
            <person name="Rasko D.A."/>
            <person name="Cheung J.K."/>
            <person name="Ravel J."/>
            <person name="Seshadri R."/>
            <person name="DeBoy R.T."/>
            <person name="Ren Q."/>
            <person name="Varga J."/>
            <person name="Awad M.M."/>
            <person name="Brinkac L.M."/>
            <person name="Daugherty S.C."/>
            <person name="Haft D.H."/>
            <person name="Dodson R.J."/>
            <person name="Madupu R."/>
            <person name="Nelson W.C."/>
            <person name="Rosovitz M.J."/>
            <person name="Sullivan S.A."/>
            <person name="Khouri H."/>
            <person name="Dimitrov G.I."/>
            <person name="Watkins K.L."/>
            <person name="Mulligan S."/>
            <person name="Benton J."/>
            <person name="Radune D."/>
            <person name="Fisher D.J."/>
            <person name="Atkins H.S."/>
            <person name="Hiscox T."/>
            <person name="Jost B.H."/>
            <person name="Billington S.J."/>
            <person name="Songer J.G."/>
            <person name="McClane B.A."/>
            <person name="Titball R.W."/>
            <person name="Rood J.I."/>
            <person name="Melville S.B."/>
            <person name="Paulsen I.T."/>
        </authorList>
    </citation>
    <scope>NUCLEOTIDE SEQUENCE [LARGE SCALE GENOMIC DNA]</scope>
    <source>
        <strain>ATCC 13124 / DSM 756 / JCM 1290 / NCIMB 6125 / NCTC 8237 / S 107 / Type A</strain>
    </source>
</reference>
<sequence length="786" mass="88059">MNDRVLRVLEFNKIKELVKGYAITKSAKEMVLDLKPYDSVYDVKEHLEETKEALDILMRKGNPPFEGLYDVKEAITRAEKGGVLSIEGLLRIGNMLSVTRKLSDFLARKEEEEEHRILEGMREGLIVLRGVESAISKAIVSEDEIADSASDKLYSIRRSLKEKNSSIRDKVNSIVRSNAQYLQDSLYTVRGDRYVIPVKAEYKSQVPGLVHDQSSTGATLFIEPTALVNLNNEIKELMLKERAEIERILAELSALVYKNIDVIKVNFNIIVELDFIFAKAKYGSDLGGTMPIVNEEGVIDLMDARHPLIPKDKVVSSDIYLGREFSTLLITGPNTGGKTVTLKTTGLIELMGLSGLLIPASENSSISFFEEIFADIGDEQSIEQSLSTFSSHMTNIVKIMEKANNKSFVLFDELGAGTDPTEGAALAISILENLRARGCRIMSTTHYSELKGYALKTENVENASVEFNVETLRPTYRLLIGVPGKSNAFEISRRLGLKDNVIEEAKKVISTESLQFEDLIQSLQEKSIKAENDAREAAILRNDAEKYKNRYKEKFERIESVRDNVYADARREAKQILDSAKEEADAILKNMRDLERMGISSDARRKLEAERGKLRDKISDAEARLQKKKEEQKGEELKKIEVGMEALLPSINQKVIVLSKPDNKGEVQVQAGIMKINVKAKDLRVAKETKEEKKIKKREARLNLRQVDPSIDLRGMDSEEACYTADKYLDDAYVAGRGEVTLVHGKGTGVLRKAINDMLKKHPHVKSHRLGEYGEGGTGVTVVILK</sequence>
<protein>
    <recommendedName>
        <fullName evidence="1">Endonuclease MutS2</fullName>
        <ecNumber evidence="1">3.1.-.-</ecNumber>
    </recommendedName>
    <alternativeName>
        <fullName evidence="1">Ribosome-associated protein quality control-upstream factor</fullName>
        <shortName evidence="1">RQC-upstream factor</shortName>
        <shortName evidence="1">RqcU</shortName>
        <ecNumber evidence="1">3.6.4.-</ecNumber>
    </alternativeName>
</protein>
<dbReference type="EC" id="3.1.-.-" evidence="1"/>
<dbReference type="EC" id="3.6.4.-" evidence="1"/>
<dbReference type="EMBL" id="CP000246">
    <property type="protein sequence ID" value="ABG83131.1"/>
    <property type="molecule type" value="Genomic_DNA"/>
</dbReference>
<dbReference type="RefSeq" id="WP_011590980.1">
    <property type="nucleotide sequence ID" value="NC_008261.1"/>
</dbReference>
<dbReference type="SMR" id="Q0TP77"/>
<dbReference type="STRING" id="195103.CPF_2135"/>
<dbReference type="PaxDb" id="195103-CPF_2135"/>
<dbReference type="KEGG" id="cpf:CPF_2135"/>
<dbReference type="eggNOG" id="COG1193">
    <property type="taxonomic scope" value="Bacteria"/>
</dbReference>
<dbReference type="HOGENOM" id="CLU_011252_2_1_9"/>
<dbReference type="Proteomes" id="UP000001823">
    <property type="component" value="Chromosome"/>
</dbReference>
<dbReference type="GO" id="GO:0005524">
    <property type="term" value="F:ATP binding"/>
    <property type="evidence" value="ECO:0007669"/>
    <property type="project" value="UniProtKB-UniRule"/>
</dbReference>
<dbReference type="GO" id="GO:0016887">
    <property type="term" value="F:ATP hydrolysis activity"/>
    <property type="evidence" value="ECO:0007669"/>
    <property type="project" value="InterPro"/>
</dbReference>
<dbReference type="GO" id="GO:0140664">
    <property type="term" value="F:ATP-dependent DNA damage sensor activity"/>
    <property type="evidence" value="ECO:0007669"/>
    <property type="project" value="InterPro"/>
</dbReference>
<dbReference type="GO" id="GO:0004519">
    <property type="term" value="F:endonuclease activity"/>
    <property type="evidence" value="ECO:0007669"/>
    <property type="project" value="UniProtKB-UniRule"/>
</dbReference>
<dbReference type="GO" id="GO:0030983">
    <property type="term" value="F:mismatched DNA binding"/>
    <property type="evidence" value="ECO:0007669"/>
    <property type="project" value="InterPro"/>
</dbReference>
<dbReference type="GO" id="GO:0043023">
    <property type="term" value="F:ribosomal large subunit binding"/>
    <property type="evidence" value="ECO:0007669"/>
    <property type="project" value="UniProtKB-UniRule"/>
</dbReference>
<dbReference type="GO" id="GO:0019843">
    <property type="term" value="F:rRNA binding"/>
    <property type="evidence" value="ECO:0007669"/>
    <property type="project" value="UniProtKB-UniRule"/>
</dbReference>
<dbReference type="GO" id="GO:0006298">
    <property type="term" value="P:mismatch repair"/>
    <property type="evidence" value="ECO:0007669"/>
    <property type="project" value="InterPro"/>
</dbReference>
<dbReference type="GO" id="GO:0045910">
    <property type="term" value="P:negative regulation of DNA recombination"/>
    <property type="evidence" value="ECO:0007669"/>
    <property type="project" value="InterPro"/>
</dbReference>
<dbReference type="GO" id="GO:0072344">
    <property type="term" value="P:rescue of stalled ribosome"/>
    <property type="evidence" value="ECO:0007669"/>
    <property type="project" value="UniProtKB-UniRule"/>
</dbReference>
<dbReference type="CDD" id="cd03280">
    <property type="entry name" value="ABC_MutS2"/>
    <property type="match status" value="1"/>
</dbReference>
<dbReference type="FunFam" id="3.30.1370.110:FF:000007">
    <property type="entry name" value="Endonuclease MutS2"/>
    <property type="match status" value="1"/>
</dbReference>
<dbReference type="FunFam" id="3.40.50.300:FF:000830">
    <property type="entry name" value="Endonuclease MutS2"/>
    <property type="match status" value="1"/>
</dbReference>
<dbReference type="Gene3D" id="3.30.1370.110">
    <property type="match status" value="1"/>
</dbReference>
<dbReference type="Gene3D" id="3.40.50.300">
    <property type="entry name" value="P-loop containing nucleotide triphosphate hydrolases"/>
    <property type="match status" value="1"/>
</dbReference>
<dbReference type="HAMAP" id="MF_00092">
    <property type="entry name" value="MutS2"/>
    <property type="match status" value="1"/>
</dbReference>
<dbReference type="InterPro" id="IPR000432">
    <property type="entry name" value="DNA_mismatch_repair_MutS_C"/>
</dbReference>
<dbReference type="InterPro" id="IPR007696">
    <property type="entry name" value="DNA_mismatch_repair_MutS_core"/>
</dbReference>
<dbReference type="InterPro" id="IPR036187">
    <property type="entry name" value="DNA_mismatch_repair_MutS_sf"/>
</dbReference>
<dbReference type="InterPro" id="IPR046893">
    <property type="entry name" value="MSSS"/>
</dbReference>
<dbReference type="InterPro" id="IPR045076">
    <property type="entry name" value="MutS"/>
</dbReference>
<dbReference type="InterPro" id="IPR005747">
    <property type="entry name" value="MutS2"/>
</dbReference>
<dbReference type="InterPro" id="IPR027417">
    <property type="entry name" value="P-loop_NTPase"/>
</dbReference>
<dbReference type="InterPro" id="IPR002625">
    <property type="entry name" value="Smr_dom"/>
</dbReference>
<dbReference type="InterPro" id="IPR036063">
    <property type="entry name" value="Smr_dom_sf"/>
</dbReference>
<dbReference type="NCBIfam" id="TIGR01069">
    <property type="entry name" value="mutS2"/>
    <property type="match status" value="1"/>
</dbReference>
<dbReference type="PANTHER" id="PTHR48466:SF2">
    <property type="entry name" value="OS10G0509000 PROTEIN"/>
    <property type="match status" value="1"/>
</dbReference>
<dbReference type="PANTHER" id="PTHR48466">
    <property type="entry name" value="OS10G0509000 PROTEIN-RELATED"/>
    <property type="match status" value="1"/>
</dbReference>
<dbReference type="Pfam" id="PF20297">
    <property type="entry name" value="MSSS"/>
    <property type="match status" value="1"/>
</dbReference>
<dbReference type="Pfam" id="PF00488">
    <property type="entry name" value="MutS_V"/>
    <property type="match status" value="1"/>
</dbReference>
<dbReference type="Pfam" id="PF01713">
    <property type="entry name" value="Smr"/>
    <property type="match status" value="1"/>
</dbReference>
<dbReference type="PIRSF" id="PIRSF005814">
    <property type="entry name" value="MutS_YshD"/>
    <property type="match status" value="1"/>
</dbReference>
<dbReference type="SMART" id="SM00534">
    <property type="entry name" value="MUTSac"/>
    <property type="match status" value="1"/>
</dbReference>
<dbReference type="SMART" id="SM00533">
    <property type="entry name" value="MUTSd"/>
    <property type="match status" value="1"/>
</dbReference>
<dbReference type="SMART" id="SM00463">
    <property type="entry name" value="SMR"/>
    <property type="match status" value="1"/>
</dbReference>
<dbReference type="SUPFAM" id="SSF48334">
    <property type="entry name" value="DNA repair protein MutS, domain III"/>
    <property type="match status" value="1"/>
</dbReference>
<dbReference type="SUPFAM" id="SSF52540">
    <property type="entry name" value="P-loop containing nucleoside triphosphate hydrolases"/>
    <property type="match status" value="1"/>
</dbReference>
<dbReference type="SUPFAM" id="SSF160443">
    <property type="entry name" value="SMR domain-like"/>
    <property type="match status" value="1"/>
</dbReference>
<dbReference type="PROSITE" id="PS00486">
    <property type="entry name" value="DNA_MISMATCH_REPAIR_2"/>
    <property type="match status" value="1"/>
</dbReference>
<dbReference type="PROSITE" id="PS50828">
    <property type="entry name" value="SMR"/>
    <property type="match status" value="1"/>
</dbReference>
<comment type="function">
    <text evidence="1">Endonuclease that is involved in the suppression of homologous recombination and thus may have a key role in the control of bacterial genetic diversity.</text>
</comment>
<comment type="function">
    <text evidence="1">Acts as a ribosome collision sensor, splitting the ribosome into its 2 subunits. Detects stalled/collided 70S ribosomes which it binds and splits by an ATP-hydrolysis driven conformational change. Acts upstream of the ribosome quality control system (RQC), a ribosome-associated complex that mediates the extraction of incompletely synthesized nascent chains from stalled ribosomes and their subsequent degradation. Probably generates substrates for RQC.</text>
</comment>
<comment type="subunit">
    <text evidence="1">Homodimer. Binds to stalled ribosomes, contacting rRNA.</text>
</comment>
<comment type="similarity">
    <text evidence="1">Belongs to the DNA mismatch repair MutS family. MutS2 subfamily.</text>
</comment>
<organism>
    <name type="scientific">Clostridium perfringens (strain ATCC 13124 / DSM 756 / JCM 1290 / NCIMB 6125 / NCTC 8237 / Type A)</name>
    <dbReference type="NCBI Taxonomy" id="195103"/>
    <lineage>
        <taxon>Bacteria</taxon>
        <taxon>Bacillati</taxon>
        <taxon>Bacillota</taxon>
        <taxon>Clostridia</taxon>
        <taxon>Eubacteriales</taxon>
        <taxon>Clostridiaceae</taxon>
        <taxon>Clostridium</taxon>
    </lineage>
</organism>